<feature type="chain" id="PRO_0000319025" description="Disintegrin VLO5B">
    <location>
        <begin position="1"/>
        <end position="69"/>
    </location>
</feature>
<feature type="domain" description="Disintegrin" evidence="1">
    <location>
        <begin position="1"/>
        <end position="66"/>
    </location>
</feature>
<feature type="short sequence motif" description="Cell attachment site; atypical (MLD)">
    <location>
        <begin position="43"/>
        <end position="45"/>
    </location>
</feature>
<feature type="disulfide bond" evidence="1">
    <location>
        <begin position="7"/>
        <end position="30"/>
    </location>
</feature>
<feature type="disulfide bond" description="Interchain (with C-7 in VLO5A)" evidence="1">
    <location>
        <position position="8"/>
    </location>
</feature>
<feature type="disulfide bond" description="Interchain (with C-12 in VLO5A)" evidence="1">
    <location>
        <position position="13"/>
    </location>
</feature>
<feature type="disulfide bond" evidence="1">
    <location>
        <begin position="21"/>
        <end position="27"/>
    </location>
</feature>
<feature type="disulfide bond" evidence="1">
    <location>
        <begin position="26"/>
        <end position="51"/>
    </location>
</feature>
<feature type="disulfide bond" evidence="1">
    <location>
        <begin position="39"/>
        <end position="58"/>
    </location>
</feature>
<name>DID5B_MACLO</name>
<proteinExistence type="evidence at protein level"/>
<dbReference type="SMR" id="P0C6B0"/>
<dbReference type="GO" id="GO:0005576">
    <property type="term" value="C:extracellular region"/>
    <property type="evidence" value="ECO:0007669"/>
    <property type="project" value="UniProtKB-SubCell"/>
</dbReference>
<dbReference type="GO" id="GO:0090729">
    <property type="term" value="F:toxin activity"/>
    <property type="evidence" value="ECO:0007669"/>
    <property type="project" value="UniProtKB-KW"/>
</dbReference>
<dbReference type="Gene3D" id="4.10.70.10">
    <property type="entry name" value="Disintegrin domain"/>
    <property type="match status" value="1"/>
</dbReference>
<dbReference type="InterPro" id="IPR018358">
    <property type="entry name" value="Disintegrin_CS"/>
</dbReference>
<dbReference type="InterPro" id="IPR001762">
    <property type="entry name" value="Disintegrin_dom"/>
</dbReference>
<dbReference type="InterPro" id="IPR036436">
    <property type="entry name" value="Disintegrin_dom_sf"/>
</dbReference>
<dbReference type="PANTHER" id="PTHR11905">
    <property type="entry name" value="ADAM A DISINTEGRIN AND METALLOPROTEASE DOMAIN"/>
    <property type="match status" value="1"/>
</dbReference>
<dbReference type="PANTHER" id="PTHR11905:SF159">
    <property type="entry name" value="ADAM METALLOPROTEASE"/>
    <property type="match status" value="1"/>
</dbReference>
<dbReference type="Pfam" id="PF00200">
    <property type="entry name" value="Disintegrin"/>
    <property type="match status" value="1"/>
</dbReference>
<dbReference type="PRINTS" id="PR00289">
    <property type="entry name" value="DISINTEGRIN"/>
</dbReference>
<dbReference type="SMART" id="SM00050">
    <property type="entry name" value="DISIN"/>
    <property type="match status" value="1"/>
</dbReference>
<dbReference type="SUPFAM" id="SSF57552">
    <property type="entry name" value="Blood coagulation inhibitor (disintegrin)"/>
    <property type="match status" value="1"/>
</dbReference>
<dbReference type="PROSITE" id="PS00427">
    <property type="entry name" value="DISINTEGRIN_1"/>
    <property type="match status" value="1"/>
</dbReference>
<dbReference type="PROSITE" id="PS50214">
    <property type="entry name" value="DISINTEGRIN_2"/>
    <property type="match status" value="1"/>
</dbReference>
<protein>
    <recommendedName>
        <fullName>Disintegrin VLO5B</fullName>
    </recommendedName>
</protein>
<keyword id="KW-1217">Cell adhesion impairing toxin</keyword>
<keyword id="KW-0903">Direct protein sequencing</keyword>
<keyword id="KW-1015">Disulfide bond</keyword>
<keyword id="KW-1199">Hemostasis impairing toxin</keyword>
<keyword id="KW-1201">Platelet aggregation inhibiting toxin</keyword>
<keyword id="KW-0964">Secreted</keyword>
<keyword id="KW-0800">Toxin</keyword>
<accession>P0C6B0</accession>
<sequence>MNSANPCCDPITCKPRRGEHCVSGPCCRNCKFLNPGTICKRTMLDGLNDYCTGVTSDCPRNPWKSEEED</sequence>
<comment type="function">
    <text evidence="2">Poor inhibitor of platelet aggregation. The disintegrin inhibits the adhesion of the alpha-4/beta-1 (ITGA4/ITGB1) integrin to VCAM-1. Inhibition on alpha-2b/beta-3 (ITGA2B/ITGB3) is low.</text>
</comment>
<comment type="subunit">
    <text evidence="2">Heterodimer with VLO5A; disulfide-linked.</text>
</comment>
<comment type="subcellular location">
    <subcellularLocation>
        <location evidence="2">Secreted</location>
    </subcellularLocation>
</comment>
<comment type="tissue specificity">
    <text>Expressed by the venom gland.</text>
</comment>
<comment type="miscellaneous">
    <text evidence="4">Negative results: does not inhibit alpha-1/beta-1 (ITGA1/ITGB1), alpha-2/beta-1 (ITGA2/ITGB1) and alpha-6/beta-1 (ITGA6/ITGB1).</text>
</comment>
<comment type="similarity">
    <text evidence="3">Belongs to the disintegrin family. Dimeric disintegrin subfamily.</text>
</comment>
<organism>
    <name type="scientific">Macrovipera lebetina obtusa</name>
    <name type="common">Levant blunt-nosed viper</name>
    <name type="synonym">Vipera lebetina obtusa</name>
    <dbReference type="NCBI Taxonomy" id="209528"/>
    <lineage>
        <taxon>Eukaryota</taxon>
        <taxon>Metazoa</taxon>
        <taxon>Chordata</taxon>
        <taxon>Craniata</taxon>
        <taxon>Vertebrata</taxon>
        <taxon>Euteleostomi</taxon>
        <taxon>Lepidosauria</taxon>
        <taxon>Squamata</taxon>
        <taxon>Bifurcata</taxon>
        <taxon>Unidentata</taxon>
        <taxon>Episquamata</taxon>
        <taxon>Toxicofera</taxon>
        <taxon>Serpentes</taxon>
        <taxon>Colubroidea</taxon>
        <taxon>Viperidae</taxon>
        <taxon>Viperinae</taxon>
        <taxon>Macrovipera</taxon>
        <taxon>Macrovipera lebetinus</taxon>
    </lineage>
</organism>
<evidence type="ECO:0000255" key="1">
    <source>
        <dbReference type="PROSITE-ProRule" id="PRU00068"/>
    </source>
</evidence>
<evidence type="ECO:0000269" key="2">
    <source>
    </source>
</evidence>
<evidence type="ECO:0000305" key="3"/>
<evidence type="ECO:0000305" key="4">
    <source>
    </source>
</evidence>
<reference key="1">
    <citation type="journal article" date="2003" name="Biochem. J.">
        <title>Snake venom disintegrins: novel dimeric disintegrins and structural diversification by disulphide bond engineering.</title>
        <authorList>
            <person name="Calvete J.J."/>
            <person name="Moreno-Murciano M.P."/>
            <person name="Theakston R.D.G."/>
            <person name="Kisiel D.G."/>
            <person name="Marcinkiewicz C."/>
        </authorList>
    </citation>
    <scope>PROTEIN SEQUENCE</scope>
    <scope>FUNCTION</scope>
    <scope>SUBUNIT</scope>
    <scope>SUBCELLULAR LOCATION</scope>
    <source>
        <tissue>Venom</tissue>
    </source>
</reference>